<keyword id="KW-0143">Chaperone</keyword>
<keyword id="KW-0963">Cytoplasm</keyword>
<keyword id="KW-1185">Reference proteome</keyword>
<keyword id="KW-0346">Stress response</keyword>
<evidence type="ECO:0000255" key="1">
    <source>
        <dbReference type="HAMAP-Rule" id="MF_01151"/>
    </source>
</evidence>
<evidence type="ECO:0000256" key="2">
    <source>
        <dbReference type="SAM" id="MobiDB-lite"/>
    </source>
</evidence>
<name>GRPE_ERWT9</name>
<dbReference type="EMBL" id="CU468135">
    <property type="protein sequence ID" value="CAO96024.1"/>
    <property type="molecule type" value="Genomic_DNA"/>
</dbReference>
<dbReference type="RefSeq" id="WP_012440725.1">
    <property type="nucleotide sequence ID" value="NC_010694.1"/>
</dbReference>
<dbReference type="SMR" id="B2VEC6"/>
<dbReference type="STRING" id="465817.ETA_09780"/>
<dbReference type="KEGG" id="eta:ETA_09780"/>
<dbReference type="eggNOG" id="COG0576">
    <property type="taxonomic scope" value="Bacteria"/>
</dbReference>
<dbReference type="HOGENOM" id="CLU_057217_6_0_6"/>
<dbReference type="OrthoDB" id="9789811at2"/>
<dbReference type="Proteomes" id="UP000001726">
    <property type="component" value="Chromosome"/>
</dbReference>
<dbReference type="GO" id="GO:0005829">
    <property type="term" value="C:cytosol"/>
    <property type="evidence" value="ECO:0007669"/>
    <property type="project" value="TreeGrafter"/>
</dbReference>
<dbReference type="GO" id="GO:0000774">
    <property type="term" value="F:adenyl-nucleotide exchange factor activity"/>
    <property type="evidence" value="ECO:0007669"/>
    <property type="project" value="InterPro"/>
</dbReference>
<dbReference type="GO" id="GO:0042803">
    <property type="term" value="F:protein homodimerization activity"/>
    <property type="evidence" value="ECO:0007669"/>
    <property type="project" value="InterPro"/>
</dbReference>
<dbReference type="GO" id="GO:0051087">
    <property type="term" value="F:protein-folding chaperone binding"/>
    <property type="evidence" value="ECO:0007669"/>
    <property type="project" value="InterPro"/>
</dbReference>
<dbReference type="GO" id="GO:0051082">
    <property type="term" value="F:unfolded protein binding"/>
    <property type="evidence" value="ECO:0007669"/>
    <property type="project" value="TreeGrafter"/>
</dbReference>
<dbReference type="GO" id="GO:0006457">
    <property type="term" value="P:protein folding"/>
    <property type="evidence" value="ECO:0007669"/>
    <property type="project" value="InterPro"/>
</dbReference>
<dbReference type="CDD" id="cd00446">
    <property type="entry name" value="GrpE"/>
    <property type="match status" value="1"/>
</dbReference>
<dbReference type="FunFam" id="2.30.22.10:FF:000001">
    <property type="entry name" value="Protein GrpE"/>
    <property type="match status" value="1"/>
</dbReference>
<dbReference type="FunFam" id="3.90.20.20:FF:000001">
    <property type="entry name" value="Protein GrpE"/>
    <property type="match status" value="1"/>
</dbReference>
<dbReference type="Gene3D" id="3.90.20.20">
    <property type="match status" value="1"/>
</dbReference>
<dbReference type="Gene3D" id="2.30.22.10">
    <property type="entry name" value="Head domain of nucleotide exchange factor GrpE"/>
    <property type="match status" value="1"/>
</dbReference>
<dbReference type="HAMAP" id="MF_01151">
    <property type="entry name" value="GrpE"/>
    <property type="match status" value="1"/>
</dbReference>
<dbReference type="InterPro" id="IPR000740">
    <property type="entry name" value="GrpE"/>
</dbReference>
<dbReference type="InterPro" id="IPR013805">
    <property type="entry name" value="GrpE_coiled_coil"/>
</dbReference>
<dbReference type="InterPro" id="IPR009012">
    <property type="entry name" value="GrpE_head"/>
</dbReference>
<dbReference type="NCBIfam" id="NF010737">
    <property type="entry name" value="PRK14139.1"/>
    <property type="match status" value="1"/>
</dbReference>
<dbReference type="NCBIfam" id="NF010738">
    <property type="entry name" value="PRK14140.1"/>
    <property type="match status" value="1"/>
</dbReference>
<dbReference type="NCBIfam" id="NF010748">
    <property type="entry name" value="PRK14150.1"/>
    <property type="match status" value="1"/>
</dbReference>
<dbReference type="PANTHER" id="PTHR21237">
    <property type="entry name" value="GRPE PROTEIN"/>
    <property type="match status" value="1"/>
</dbReference>
<dbReference type="PANTHER" id="PTHR21237:SF23">
    <property type="entry name" value="GRPE PROTEIN HOMOLOG, MITOCHONDRIAL"/>
    <property type="match status" value="1"/>
</dbReference>
<dbReference type="Pfam" id="PF01025">
    <property type="entry name" value="GrpE"/>
    <property type="match status" value="1"/>
</dbReference>
<dbReference type="PRINTS" id="PR00773">
    <property type="entry name" value="GRPEPROTEIN"/>
</dbReference>
<dbReference type="SUPFAM" id="SSF58014">
    <property type="entry name" value="Coiled-coil domain of nucleotide exchange factor GrpE"/>
    <property type="match status" value="1"/>
</dbReference>
<dbReference type="SUPFAM" id="SSF51064">
    <property type="entry name" value="Head domain of nucleotide exchange factor GrpE"/>
    <property type="match status" value="1"/>
</dbReference>
<dbReference type="PROSITE" id="PS01071">
    <property type="entry name" value="GRPE"/>
    <property type="match status" value="1"/>
</dbReference>
<reference key="1">
    <citation type="journal article" date="2008" name="Environ. Microbiol.">
        <title>The genome of Erwinia tasmaniensis strain Et1/99, a non-pathogenic bacterium in the genus Erwinia.</title>
        <authorList>
            <person name="Kube M."/>
            <person name="Migdoll A.M."/>
            <person name="Mueller I."/>
            <person name="Kuhl H."/>
            <person name="Beck A."/>
            <person name="Reinhardt R."/>
            <person name="Geider K."/>
        </authorList>
    </citation>
    <scope>NUCLEOTIDE SEQUENCE [LARGE SCALE GENOMIC DNA]</scope>
    <source>
        <strain>DSM 17950 / CFBP 7177 / CIP 109463 / NCPPB 4357 / Et1/99</strain>
    </source>
</reference>
<sequence>MSSKEQNTPNEQASDEIETEQAKNQGADTAAEAADQRDERIAQLEAQLAESQGGVRDAQLRAQAEIENIRRRAELDVEKAHKFALEKFSNELLPVIDSLERALEVADKSNPELAAMIEGIDLTMKSLLGAVRKFGVEVVGDTNVPFNPEVHQAMSMMESEEVEPNHVMMVMQRGYTLNGRLLRPAMVAVAKSKG</sequence>
<comment type="function">
    <text evidence="1">Participates actively in the response to hyperosmotic and heat shock by preventing the aggregation of stress-denatured proteins, in association with DnaK and GrpE. It is the nucleotide exchange factor for DnaK and may function as a thermosensor. Unfolded proteins bind initially to DnaJ; upon interaction with the DnaJ-bound protein, DnaK hydrolyzes its bound ATP, resulting in the formation of a stable complex. GrpE releases ADP from DnaK; ATP binding to DnaK triggers the release of the substrate protein, thus completing the reaction cycle. Several rounds of ATP-dependent interactions between DnaJ, DnaK and GrpE are required for fully efficient folding.</text>
</comment>
<comment type="subunit">
    <text evidence="1">Homodimer.</text>
</comment>
<comment type="subcellular location">
    <subcellularLocation>
        <location evidence="1">Cytoplasm</location>
    </subcellularLocation>
</comment>
<comment type="similarity">
    <text evidence="1">Belongs to the GrpE family.</text>
</comment>
<proteinExistence type="inferred from homology"/>
<accession>B2VEC6</accession>
<protein>
    <recommendedName>
        <fullName evidence="1">Protein GrpE</fullName>
    </recommendedName>
    <alternativeName>
        <fullName evidence="1">HSP-70 cofactor</fullName>
    </alternativeName>
</protein>
<gene>
    <name evidence="1" type="primary">grpE</name>
    <name type="ordered locus">ETA_09780</name>
</gene>
<organism>
    <name type="scientific">Erwinia tasmaniensis (strain DSM 17950 / CFBP 7177 / CIP 109463 / NCPPB 4357 / Et1/99)</name>
    <dbReference type="NCBI Taxonomy" id="465817"/>
    <lineage>
        <taxon>Bacteria</taxon>
        <taxon>Pseudomonadati</taxon>
        <taxon>Pseudomonadota</taxon>
        <taxon>Gammaproteobacteria</taxon>
        <taxon>Enterobacterales</taxon>
        <taxon>Erwiniaceae</taxon>
        <taxon>Erwinia</taxon>
    </lineage>
</organism>
<feature type="chain" id="PRO_1000137568" description="Protein GrpE">
    <location>
        <begin position="1"/>
        <end position="194"/>
    </location>
</feature>
<feature type="region of interest" description="Disordered" evidence="2">
    <location>
        <begin position="1"/>
        <end position="39"/>
    </location>
</feature>
<feature type="compositionally biased region" description="Polar residues" evidence="2">
    <location>
        <begin position="1"/>
        <end position="12"/>
    </location>
</feature>